<feature type="chain" id="PRO_1000191954" description="Aspartate 1-decarboxylase beta chain" evidence="1">
    <location>
        <begin position="1"/>
        <end position="24"/>
    </location>
</feature>
<feature type="chain" id="PRO_1000191955" description="Aspartate 1-decarboxylase alpha chain" evidence="1">
    <location>
        <begin position="25"/>
        <end position="124"/>
    </location>
</feature>
<feature type="active site" description="Schiff-base intermediate with substrate; via pyruvic acid" evidence="1">
    <location>
        <position position="25"/>
    </location>
</feature>
<feature type="active site" description="Proton donor" evidence="1">
    <location>
        <position position="58"/>
    </location>
</feature>
<feature type="binding site" evidence="1">
    <location>
        <position position="57"/>
    </location>
    <ligand>
        <name>substrate</name>
    </ligand>
</feature>
<feature type="binding site" evidence="1">
    <location>
        <begin position="73"/>
        <end position="75"/>
    </location>
    <ligand>
        <name>substrate</name>
    </ligand>
</feature>
<feature type="modified residue" description="Pyruvic acid (Ser)" evidence="1">
    <location>
        <position position="25"/>
    </location>
</feature>
<protein>
    <recommendedName>
        <fullName evidence="1">Aspartate 1-decarboxylase</fullName>
        <ecNumber evidence="1">4.1.1.11</ecNumber>
    </recommendedName>
    <alternativeName>
        <fullName evidence="1">Aspartate alpha-decarboxylase</fullName>
    </alternativeName>
    <component>
        <recommendedName>
            <fullName evidence="1">Aspartate 1-decarboxylase beta chain</fullName>
        </recommendedName>
    </component>
    <component>
        <recommendedName>
            <fullName evidence="1">Aspartate 1-decarboxylase alpha chain</fullName>
        </recommendedName>
    </component>
</protein>
<name>PAND_CLOBA</name>
<sequence>MILNMLKGKIHRATVTQADLNYMGSITIDKTLIDAAGILENEKVQIVDNNNGARLETYVIPGKRDSGIICLNGAAARLVQPGDEIIIIAYAQIIESEAKTYKPKVVFVNDDNTIKEITNYEFNE</sequence>
<reference key="1">
    <citation type="submission" date="2008-05" db="EMBL/GenBank/DDBJ databases">
        <title>Complete genome sequence of Clostridium botulinum E3 str. Alaska E43.</title>
        <authorList>
            <person name="Brinkac L.M."/>
            <person name="Brown J.L."/>
            <person name="Bruce D."/>
            <person name="Detter C."/>
            <person name="Munk C."/>
            <person name="Smith L.A."/>
            <person name="Smith T.J."/>
            <person name="Sutton G."/>
            <person name="Brettin T.S."/>
        </authorList>
    </citation>
    <scope>NUCLEOTIDE SEQUENCE [LARGE SCALE GENOMIC DNA]</scope>
    <source>
        <strain>Alaska E43 / Type E3</strain>
    </source>
</reference>
<gene>
    <name evidence="1" type="primary">panD</name>
    <name type="ordered locus">CLH_1682</name>
</gene>
<organism>
    <name type="scientific">Clostridium botulinum (strain Alaska E43 / Type E3)</name>
    <dbReference type="NCBI Taxonomy" id="508767"/>
    <lineage>
        <taxon>Bacteria</taxon>
        <taxon>Bacillati</taxon>
        <taxon>Bacillota</taxon>
        <taxon>Clostridia</taxon>
        <taxon>Eubacteriales</taxon>
        <taxon>Clostridiaceae</taxon>
        <taxon>Clostridium</taxon>
    </lineage>
</organism>
<accession>B2V1M0</accession>
<proteinExistence type="inferred from homology"/>
<evidence type="ECO:0000255" key="1">
    <source>
        <dbReference type="HAMAP-Rule" id="MF_00446"/>
    </source>
</evidence>
<comment type="function">
    <text evidence="1">Catalyzes the pyruvoyl-dependent decarboxylation of aspartate to produce beta-alanine.</text>
</comment>
<comment type="catalytic activity">
    <reaction evidence="1">
        <text>L-aspartate + H(+) = beta-alanine + CO2</text>
        <dbReference type="Rhea" id="RHEA:19497"/>
        <dbReference type="ChEBI" id="CHEBI:15378"/>
        <dbReference type="ChEBI" id="CHEBI:16526"/>
        <dbReference type="ChEBI" id="CHEBI:29991"/>
        <dbReference type="ChEBI" id="CHEBI:57966"/>
        <dbReference type="EC" id="4.1.1.11"/>
    </reaction>
</comment>
<comment type="cofactor">
    <cofactor evidence="1">
        <name>pyruvate</name>
        <dbReference type="ChEBI" id="CHEBI:15361"/>
    </cofactor>
    <text evidence="1">Binds 1 pyruvoyl group covalently per subunit.</text>
</comment>
<comment type="pathway">
    <text evidence="1">Cofactor biosynthesis; (R)-pantothenate biosynthesis; beta-alanine from L-aspartate: step 1/1.</text>
</comment>
<comment type="subunit">
    <text evidence="1">Heterooctamer of four alpha and four beta subunits.</text>
</comment>
<comment type="subcellular location">
    <subcellularLocation>
        <location evidence="1">Cytoplasm</location>
    </subcellularLocation>
</comment>
<comment type="PTM">
    <text evidence="1">Is synthesized initially as an inactive proenzyme, which is activated by self-cleavage at a specific serine bond to produce a beta-subunit with a hydroxyl group at its C-terminus and an alpha-subunit with a pyruvoyl group at its N-terminus.</text>
</comment>
<comment type="similarity">
    <text evidence="1">Belongs to the PanD family.</text>
</comment>
<keyword id="KW-0068">Autocatalytic cleavage</keyword>
<keyword id="KW-0963">Cytoplasm</keyword>
<keyword id="KW-0210">Decarboxylase</keyword>
<keyword id="KW-0456">Lyase</keyword>
<keyword id="KW-0566">Pantothenate biosynthesis</keyword>
<keyword id="KW-0670">Pyruvate</keyword>
<keyword id="KW-0704">Schiff base</keyword>
<keyword id="KW-0865">Zymogen</keyword>
<dbReference type="EC" id="4.1.1.11" evidence="1"/>
<dbReference type="EMBL" id="CP001078">
    <property type="protein sequence ID" value="ACD52538.1"/>
    <property type="molecule type" value="Genomic_DNA"/>
</dbReference>
<dbReference type="RefSeq" id="WP_012450663.1">
    <property type="nucleotide sequence ID" value="NC_010723.1"/>
</dbReference>
<dbReference type="SMR" id="B2V1M0"/>
<dbReference type="KEGG" id="cbt:CLH_1682"/>
<dbReference type="HOGENOM" id="CLU_115305_2_0_9"/>
<dbReference type="UniPathway" id="UPA00028">
    <property type="reaction ID" value="UER00002"/>
</dbReference>
<dbReference type="GO" id="GO:0005829">
    <property type="term" value="C:cytosol"/>
    <property type="evidence" value="ECO:0007669"/>
    <property type="project" value="TreeGrafter"/>
</dbReference>
<dbReference type="GO" id="GO:0004068">
    <property type="term" value="F:aspartate 1-decarboxylase activity"/>
    <property type="evidence" value="ECO:0007669"/>
    <property type="project" value="UniProtKB-UniRule"/>
</dbReference>
<dbReference type="GO" id="GO:0006523">
    <property type="term" value="P:alanine biosynthetic process"/>
    <property type="evidence" value="ECO:0007669"/>
    <property type="project" value="InterPro"/>
</dbReference>
<dbReference type="GO" id="GO:0015940">
    <property type="term" value="P:pantothenate biosynthetic process"/>
    <property type="evidence" value="ECO:0007669"/>
    <property type="project" value="UniProtKB-UniRule"/>
</dbReference>
<dbReference type="CDD" id="cd06919">
    <property type="entry name" value="Asp_decarbox"/>
    <property type="match status" value="1"/>
</dbReference>
<dbReference type="Gene3D" id="2.40.40.20">
    <property type="match status" value="1"/>
</dbReference>
<dbReference type="HAMAP" id="MF_00446">
    <property type="entry name" value="PanD"/>
    <property type="match status" value="1"/>
</dbReference>
<dbReference type="InterPro" id="IPR009010">
    <property type="entry name" value="Asp_de-COase-like_dom_sf"/>
</dbReference>
<dbReference type="InterPro" id="IPR003190">
    <property type="entry name" value="Asp_decarbox"/>
</dbReference>
<dbReference type="NCBIfam" id="TIGR00223">
    <property type="entry name" value="panD"/>
    <property type="match status" value="1"/>
</dbReference>
<dbReference type="PANTHER" id="PTHR21012">
    <property type="entry name" value="ASPARTATE 1-DECARBOXYLASE"/>
    <property type="match status" value="1"/>
</dbReference>
<dbReference type="PANTHER" id="PTHR21012:SF0">
    <property type="entry name" value="ASPARTATE 1-DECARBOXYLASE"/>
    <property type="match status" value="1"/>
</dbReference>
<dbReference type="Pfam" id="PF02261">
    <property type="entry name" value="Asp_decarbox"/>
    <property type="match status" value="1"/>
</dbReference>
<dbReference type="PIRSF" id="PIRSF006246">
    <property type="entry name" value="Asp_decarbox"/>
    <property type="match status" value="1"/>
</dbReference>
<dbReference type="SUPFAM" id="SSF50692">
    <property type="entry name" value="ADC-like"/>
    <property type="match status" value="1"/>
</dbReference>